<gene>
    <name evidence="1" type="primary">recAL</name>
</gene>
<feature type="chain" id="PRO_0000122734" description="Protein RecA, plasmid">
    <location>
        <begin position="1"/>
        <end position="341"/>
    </location>
</feature>
<feature type="binding site" evidence="1">
    <location>
        <begin position="80"/>
        <end position="87"/>
    </location>
    <ligand>
        <name>ATP</name>
        <dbReference type="ChEBI" id="CHEBI:30616"/>
    </ligand>
</feature>
<reference key="1">
    <citation type="journal article" date="1997" name="Appl. Environ. Microbiol.">
        <title>Identification of a recA homolog (recALP) on the conjugative lactococcal phage resistance plasmid pNP40: evidence of a role for chromosomally encoded recAL in abortive infection.</title>
        <authorList>
            <person name="Garvey P."/>
            <person name="Rince A."/>
            <person name="Hill C."/>
            <person name="Fitzgerald G.F."/>
        </authorList>
    </citation>
    <scope>NUCLEOTIDE SEQUENCE [GENOMIC DNA]</scope>
    <source>
        <strain>DRC3</strain>
    </source>
</reference>
<evidence type="ECO:0000255" key="1">
    <source>
        <dbReference type="HAMAP-Rule" id="MF_00268"/>
    </source>
</evidence>
<comment type="function">
    <text>Can catalyze the hydrolysis of ATP in the presence of single-stranded DNA, the ATP-dependent uptake of single-stranded DNA by duplex DNA, and the ATP-dependent hybridization of homologous single-stranded DNAs. It interacts with LexA causing its activation and leading to its autocatalytic cleavage.</text>
</comment>
<comment type="subcellular location">
    <subcellularLocation>
        <location evidence="1">Cytoplasm</location>
    </subcellularLocation>
</comment>
<comment type="similarity">
    <text evidence="1">Belongs to the RecA family.</text>
</comment>
<accession>Q59486</accession>
<geneLocation type="plasmid">
    <name>pNP40</name>
</geneLocation>
<proteinExistence type="inferred from homology"/>
<keyword id="KW-0067">ATP-binding</keyword>
<keyword id="KW-0963">Cytoplasm</keyword>
<keyword id="KW-0227">DNA damage</keyword>
<keyword id="KW-0233">DNA recombination</keyword>
<keyword id="KW-0234">DNA repair</keyword>
<keyword id="KW-0238">DNA-binding</keyword>
<keyword id="KW-0547">Nucleotide-binding</keyword>
<keyword id="KW-0614">Plasmid</keyword>
<keyword id="KW-0742">SOS response</keyword>
<organism>
    <name type="scientific">Lactococcus lactis subsp. lactis</name>
    <name type="common">Streptococcus lactis</name>
    <dbReference type="NCBI Taxonomy" id="1360"/>
    <lineage>
        <taxon>Bacteria</taxon>
        <taxon>Bacillati</taxon>
        <taxon>Bacillota</taxon>
        <taxon>Bacilli</taxon>
        <taxon>Lactobacillales</taxon>
        <taxon>Streptococcaceae</taxon>
        <taxon>Lactococcus</taxon>
    </lineage>
</organism>
<dbReference type="EMBL" id="U36837">
    <property type="protein sequence ID" value="AAB52384.1"/>
    <property type="molecule type" value="Genomic_DNA"/>
</dbReference>
<dbReference type="RefSeq" id="YP_001966451.1">
    <property type="nucleotide sequence ID" value="NC_010901.1"/>
</dbReference>
<dbReference type="SMR" id="Q59486"/>
<dbReference type="GO" id="GO:0005829">
    <property type="term" value="C:cytosol"/>
    <property type="evidence" value="ECO:0007669"/>
    <property type="project" value="TreeGrafter"/>
</dbReference>
<dbReference type="GO" id="GO:0005524">
    <property type="term" value="F:ATP binding"/>
    <property type="evidence" value="ECO:0007669"/>
    <property type="project" value="UniProtKB-UniRule"/>
</dbReference>
<dbReference type="GO" id="GO:0016887">
    <property type="term" value="F:ATP hydrolysis activity"/>
    <property type="evidence" value="ECO:0007669"/>
    <property type="project" value="InterPro"/>
</dbReference>
<dbReference type="GO" id="GO:0140664">
    <property type="term" value="F:ATP-dependent DNA damage sensor activity"/>
    <property type="evidence" value="ECO:0007669"/>
    <property type="project" value="InterPro"/>
</dbReference>
<dbReference type="GO" id="GO:0003684">
    <property type="term" value="F:damaged DNA binding"/>
    <property type="evidence" value="ECO:0007669"/>
    <property type="project" value="UniProtKB-UniRule"/>
</dbReference>
<dbReference type="GO" id="GO:0003697">
    <property type="term" value="F:single-stranded DNA binding"/>
    <property type="evidence" value="ECO:0007669"/>
    <property type="project" value="UniProtKB-UniRule"/>
</dbReference>
<dbReference type="GO" id="GO:0006310">
    <property type="term" value="P:DNA recombination"/>
    <property type="evidence" value="ECO:0007669"/>
    <property type="project" value="UniProtKB-UniRule"/>
</dbReference>
<dbReference type="GO" id="GO:0006281">
    <property type="term" value="P:DNA repair"/>
    <property type="evidence" value="ECO:0007669"/>
    <property type="project" value="UniProtKB-UniRule"/>
</dbReference>
<dbReference type="GO" id="GO:0009432">
    <property type="term" value="P:SOS response"/>
    <property type="evidence" value="ECO:0007669"/>
    <property type="project" value="UniProtKB-UniRule"/>
</dbReference>
<dbReference type="CDD" id="cd00983">
    <property type="entry name" value="RecA"/>
    <property type="match status" value="1"/>
</dbReference>
<dbReference type="Gene3D" id="3.40.50.300">
    <property type="entry name" value="P-loop containing nucleotide triphosphate hydrolases"/>
    <property type="match status" value="1"/>
</dbReference>
<dbReference type="HAMAP" id="MF_00268">
    <property type="entry name" value="RecA"/>
    <property type="match status" value="1"/>
</dbReference>
<dbReference type="InterPro" id="IPR003593">
    <property type="entry name" value="AAA+_ATPase"/>
</dbReference>
<dbReference type="InterPro" id="IPR013765">
    <property type="entry name" value="DNA_recomb/repair_RecA"/>
</dbReference>
<dbReference type="InterPro" id="IPR020584">
    <property type="entry name" value="DNA_recomb/repair_RecA_CS"/>
</dbReference>
<dbReference type="InterPro" id="IPR027417">
    <property type="entry name" value="P-loop_NTPase"/>
</dbReference>
<dbReference type="InterPro" id="IPR049261">
    <property type="entry name" value="RecA-like_C"/>
</dbReference>
<dbReference type="InterPro" id="IPR049428">
    <property type="entry name" value="RecA-like_N"/>
</dbReference>
<dbReference type="InterPro" id="IPR020588">
    <property type="entry name" value="RecA_ATP-bd"/>
</dbReference>
<dbReference type="InterPro" id="IPR023400">
    <property type="entry name" value="RecA_C_sf"/>
</dbReference>
<dbReference type="InterPro" id="IPR020587">
    <property type="entry name" value="RecA_monomer-monomer_interface"/>
</dbReference>
<dbReference type="NCBIfam" id="TIGR02012">
    <property type="entry name" value="tigrfam_recA"/>
    <property type="match status" value="1"/>
</dbReference>
<dbReference type="PANTHER" id="PTHR45900:SF1">
    <property type="entry name" value="MITOCHONDRIAL DNA REPAIR PROTEIN RECA HOMOLOG-RELATED"/>
    <property type="match status" value="1"/>
</dbReference>
<dbReference type="PANTHER" id="PTHR45900">
    <property type="entry name" value="RECA"/>
    <property type="match status" value="1"/>
</dbReference>
<dbReference type="Pfam" id="PF00154">
    <property type="entry name" value="RecA"/>
    <property type="match status" value="1"/>
</dbReference>
<dbReference type="Pfam" id="PF21096">
    <property type="entry name" value="RecA_C"/>
    <property type="match status" value="1"/>
</dbReference>
<dbReference type="PRINTS" id="PR00142">
    <property type="entry name" value="RECA"/>
</dbReference>
<dbReference type="SMART" id="SM00382">
    <property type="entry name" value="AAA"/>
    <property type="match status" value="1"/>
</dbReference>
<dbReference type="SUPFAM" id="SSF52540">
    <property type="entry name" value="P-loop containing nucleoside triphosphate hydrolases"/>
    <property type="match status" value="1"/>
</dbReference>
<dbReference type="SUPFAM" id="SSF54752">
    <property type="entry name" value="RecA protein, C-terminal domain"/>
    <property type="match status" value="1"/>
</dbReference>
<dbReference type="PROSITE" id="PS00321">
    <property type="entry name" value="RECA_1"/>
    <property type="match status" value="1"/>
</dbReference>
<dbReference type="PROSITE" id="PS50162">
    <property type="entry name" value="RECA_2"/>
    <property type="match status" value="1"/>
</dbReference>
<dbReference type="PROSITE" id="PS50163">
    <property type="entry name" value="RECA_3"/>
    <property type="match status" value="1"/>
</dbReference>
<name>RECA_LACLL</name>
<protein>
    <recommendedName>
        <fullName evidence="1">Protein RecA, plasmid</fullName>
    </recommendedName>
    <alternativeName>
        <fullName evidence="1">Recombinase A</fullName>
    </alternativeName>
    <alternativeName>
        <fullName>recaLP</fullName>
    </alternativeName>
</protein>
<sequence length="341" mass="37177">MEQPQYNSYKVRKLDDPEEKKLAILKATQSIEKKFGSNTILNEEGKASQHVQALPSGILSLDCAIGIGGYPKGRLIELFGAESSGKTTVALQAVAETQKNGGYVAYIDAENSLDIEYAENLGVKSDSLIFAQPDTGEEAFYMINEFVRTGAFDLIVVDSVAALTPASEIDGVKMPGQQAKMMSEQLSQLVGKVNQTKTVIIFINQIRSTMSGLFLNKETTPGGSALKFYSSVRIEVKSGEKIKDGIDTIGKKTTLHTVKNKVSSPYKKPTVINIFGDGFSQEIDVVTTALQLGVVKKLGEWYSFNGQKLGRGIFGVKEYLSHHPSVFNALDNLTREALQFS</sequence>